<keyword id="KW-1185">Reference proteome</keyword>
<keyword id="KW-0687">Ribonucleoprotein</keyword>
<keyword id="KW-0689">Ribosomal protein</keyword>
<keyword id="KW-0694">RNA-binding</keyword>
<keyword id="KW-0699">rRNA-binding</keyword>
<organism>
    <name type="scientific">Methanocella arvoryzae (strain DSM 22066 / NBRC 105507 / MRE50)</name>
    <dbReference type="NCBI Taxonomy" id="351160"/>
    <lineage>
        <taxon>Archaea</taxon>
        <taxon>Methanobacteriati</taxon>
        <taxon>Methanobacteriota</taxon>
        <taxon>Stenosarchaea group</taxon>
        <taxon>Methanomicrobia</taxon>
        <taxon>Methanocellales</taxon>
        <taxon>Methanocellaceae</taxon>
        <taxon>Methanocella</taxon>
    </lineage>
</organism>
<protein>
    <recommendedName>
        <fullName evidence="1">Large ribosomal subunit protein uL24</fullName>
    </recommendedName>
    <alternativeName>
        <fullName evidence="2">50S ribosomal protein L24</fullName>
    </alternativeName>
</protein>
<feature type="chain" id="PRO_0000355741" description="Large ribosomal subunit protein uL24">
    <location>
        <begin position="1"/>
        <end position="123"/>
    </location>
</feature>
<comment type="function">
    <text evidence="1">One of two assembly initiator proteins, it binds directly to the 5'-end of the 23S rRNA, where it nucleates assembly of the 50S subunit.</text>
</comment>
<comment type="function">
    <text evidence="1">Located at the polypeptide exit tunnel on the outside of the subunit.</text>
</comment>
<comment type="subunit">
    <text evidence="1">Part of the 50S ribosomal subunit.</text>
</comment>
<comment type="similarity">
    <text evidence="1">Belongs to the universal ribosomal protein uL24 family.</text>
</comment>
<evidence type="ECO:0000255" key="1">
    <source>
        <dbReference type="HAMAP-Rule" id="MF_01326"/>
    </source>
</evidence>
<evidence type="ECO:0000305" key="2"/>
<sequence>MCEVCVMVTSSQPRKQRKFRYEAPQHVRSNFINARLSEELSKKYGRTARVIVGDTVKVMRGDAAGTEGKVREIDVKREKVVVEGVSVARADGKEEARPIHPSNLMITKLVLDDPKRVASLERK</sequence>
<dbReference type="EMBL" id="AM114193">
    <property type="protein sequence ID" value="CAJ37616.1"/>
    <property type="molecule type" value="Genomic_DNA"/>
</dbReference>
<dbReference type="SMR" id="Q0W1X7"/>
<dbReference type="STRING" id="351160.RCIX2556"/>
<dbReference type="KEGG" id="rci:RCIX2556"/>
<dbReference type="PATRIC" id="fig|351160.9.peg.667"/>
<dbReference type="eggNOG" id="arCOG04094">
    <property type="taxonomic scope" value="Archaea"/>
</dbReference>
<dbReference type="OrthoDB" id="10899at2157"/>
<dbReference type="Proteomes" id="UP000000663">
    <property type="component" value="Chromosome"/>
</dbReference>
<dbReference type="GO" id="GO:0015934">
    <property type="term" value="C:large ribosomal subunit"/>
    <property type="evidence" value="ECO:0007669"/>
    <property type="project" value="InterPro"/>
</dbReference>
<dbReference type="GO" id="GO:0019843">
    <property type="term" value="F:rRNA binding"/>
    <property type="evidence" value="ECO:0007669"/>
    <property type="project" value="UniProtKB-UniRule"/>
</dbReference>
<dbReference type="GO" id="GO:0003735">
    <property type="term" value="F:structural constituent of ribosome"/>
    <property type="evidence" value="ECO:0007669"/>
    <property type="project" value="InterPro"/>
</dbReference>
<dbReference type="GO" id="GO:0006412">
    <property type="term" value="P:translation"/>
    <property type="evidence" value="ECO:0007669"/>
    <property type="project" value="UniProtKB-UniRule"/>
</dbReference>
<dbReference type="CDD" id="cd06089">
    <property type="entry name" value="KOW_RPL26"/>
    <property type="match status" value="1"/>
</dbReference>
<dbReference type="Gene3D" id="2.30.30.30">
    <property type="match status" value="1"/>
</dbReference>
<dbReference type="HAMAP" id="MF_01326_A">
    <property type="entry name" value="Ribosomal_uL24_A"/>
    <property type="match status" value="1"/>
</dbReference>
<dbReference type="InterPro" id="IPR005824">
    <property type="entry name" value="KOW"/>
</dbReference>
<dbReference type="InterPro" id="IPR014722">
    <property type="entry name" value="Rib_uL2_dom2"/>
</dbReference>
<dbReference type="InterPro" id="IPR005825">
    <property type="entry name" value="Ribosomal_uL24_CS"/>
</dbReference>
<dbReference type="InterPro" id="IPR005756">
    <property type="entry name" value="Ribosomal_uL24_euk/arc"/>
</dbReference>
<dbReference type="InterPro" id="IPR041988">
    <property type="entry name" value="Ribosomal_uL24_KOW"/>
</dbReference>
<dbReference type="InterPro" id="IPR008991">
    <property type="entry name" value="Translation_prot_SH3-like_sf"/>
</dbReference>
<dbReference type="NCBIfam" id="TIGR01080">
    <property type="entry name" value="rplX_A_E"/>
    <property type="match status" value="1"/>
</dbReference>
<dbReference type="PANTHER" id="PTHR11143">
    <property type="entry name" value="60S RIBOSOMAL PROTEIN L26 FAMILY MEMBER"/>
    <property type="match status" value="1"/>
</dbReference>
<dbReference type="Pfam" id="PF00467">
    <property type="entry name" value="KOW"/>
    <property type="match status" value="1"/>
</dbReference>
<dbReference type="Pfam" id="PF16906">
    <property type="entry name" value="Ribosomal_L26"/>
    <property type="match status" value="1"/>
</dbReference>
<dbReference type="SUPFAM" id="SSF50104">
    <property type="entry name" value="Translation proteins SH3-like domain"/>
    <property type="match status" value="1"/>
</dbReference>
<dbReference type="PROSITE" id="PS01108">
    <property type="entry name" value="RIBOSOMAL_L24"/>
    <property type="match status" value="1"/>
</dbReference>
<name>RL24_METAR</name>
<accession>Q0W1X7</accession>
<proteinExistence type="inferred from homology"/>
<reference key="1">
    <citation type="journal article" date="2006" name="Science">
        <title>Genome of rice cluster I archaea -- the key methane producers in the rice rhizosphere.</title>
        <authorList>
            <person name="Erkel C."/>
            <person name="Kube M."/>
            <person name="Reinhardt R."/>
            <person name="Liesack W."/>
        </authorList>
    </citation>
    <scope>NUCLEOTIDE SEQUENCE [LARGE SCALE GENOMIC DNA]</scope>
    <source>
        <strain>DSM 22066 / NBRC 105507 / MRE50</strain>
    </source>
</reference>
<gene>
    <name evidence="1" type="primary">rpl24</name>
    <name type="ordered locus">UNCMA_06400</name>
    <name type="ORF">RCIX2556</name>
</gene>